<name>Y1195_STRPI</name>
<accession>B1IBP0</accession>
<sequence>MMNMQNMMRQAQKLQKQMEQSQAELAAMQFVGKSAQDLVQATLTGDKKVVSIDFNPAVVDPEDLETLSDMTVQAINSALEQIDETTKKKLGAFAGKLPF</sequence>
<gene>
    <name type="ordered locus">SPH_1195</name>
</gene>
<comment type="function">
    <text evidence="1">Binds to DNA and alters its conformation. May be involved in regulation of gene expression, nucleoid organization and DNA protection.</text>
</comment>
<comment type="subunit">
    <text evidence="1">Homodimer.</text>
</comment>
<comment type="subcellular location">
    <subcellularLocation>
        <location evidence="1">Cytoplasm</location>
        <location evidence="1">Nucleoid</location>
    </subcellularLocation>
</comment>
<comment type="similarity">
    <text evidence="1">Belongs to the YbaB/EbfC family.</text>
</comment>
<keyword id="KW-0963">Cytoplasm</keyword>
<keyword id="KW-0238">DNA-binding</keyword>
<feature type="chain" id="PRO_1000114655" description="Nucleoid-associated protein SPH_1195">
    <location>
        <begin position="1"/>
        <end position="99"/>
    </location>
</feature>
<evidence type="ECO:0000255" key="1">
    <source>
        <dbReference type="HAMAP-Rule" id="MF_00274"/>
    </source>
</evidence>
<reference key="1">
    <citation type="journal article" date="2010" name="Genome Biol.">
        <title>Structure and dynamics of the pan-genome of Streptococcus pneumoniae and closely related species.</title>
        <authorList>
            <person name="Donati C."/>
            <person name="Hiller N.L."/>
            <person name="Tettelin H."/>
            <person name="Muzzi A."/>
            <person name="Croucher N.J."/>
            <person name="Angiuoli S.V."/>
            <person name="Oggioni M."/>
            <person name="Dunning Hotopp J.C."/>
            <person name="Hu F.Z."/>
            <person name="Riley D.R."/>
            <person name="Covacci A."/>
            <person name="Mitchell T.J."/>
            <person name="Bentley S.D."/>
            <person name="Kilian M."/>
            <person name="Ehrlich G.D."/>
            <person name="Rappuoli R."/>
            <person name="Moxon E.R."/>
            <person name="Masignani V."/>
        </authorList>
    </citation>
    <scope>NUCLEOTIDE SEQUENCE [LARGE SCALE GENOMIC DNA]</scope>
    <source>
        <strain>Hungary19A-6</strain>
    </source>
</reference>
<dbReference type="EMBL" id="CP000936">
    <property type="protein sequence ID" value="ACA37614.1"/>
    <property type="molecule type" value="Genomic_DNA"/>
</dbReference>
<dbReference type="RefSeq" id="WP_000981526.1">
    <property type="nucleotide sequence ID" value="NC_010380.1"/>
</dbReference>
<dbReference type="SMR" id="B1IBP0"/>
<dbReference type="KEGG" id="spv:SPH_1195"/>
<dbReference type="HOGENOM" id="CLU_140930_1_1_9"/>
<dbReference type="Proteomes" id="UP000002163">
    <property type="component" value="Chromosome"/>
</dbReference>
<dbReference type="GO" id="GO:0043590">
    <property type="term" value="C:bacterial nucleoid"/>
    <property type="evidence" value="ECO:0007669"/>
    <property type="project" value="UniProtKB-UniRule"/>
</dbReference>
<dbReference type="GO" id="GO:0005829">
    <property type="term" value="C:cytosol"/>
    <property type="evidence" value="ECO:0007669"/>
    <property type="project" value="TreeGrafter"/>
</dbReference>
<dbReference type="GO" id="GO:0003677">
    <property type="term" value="F:DNA binding"/>
    <property type="evidence" value="ECO:0007669"/>
    <property type="project" value="UniProtKB-UniRule"/>
</dbReference>
<dbReference type="FunFam" id="3.30.1310.10:FF:000005">
    <property type="entry name" value="Nucleoid-associated protein SPAR113_1167"/>
    <property type="match status" value="1"/>
</dbReference>
<dbReference type="Gene3D" id="3.30.1310.10">
    <property type="entry name" value="Nucleoid-associated protein YbaB-like domain"/>
    <property type="match status" value="1"/>
</dbReference>
<dbReference type="HAMAP" id="MF_00274">
    <property type="entry name" value="DNA_YbaB_EbfC"/>
    <property type="match status" value="1"/>
</dbReference>
<dbReference type="InterPro" id="IPR036894">
    <property type="entry name" value="YbaB-like_sf"/>
</dbReference>
<dbReference type="InterPro" id="IPR004401">
    <property type="entry name" value="YbaB/EbfC"/>
</dbReference>
<dbReference type="NCBIfam" id="TIGR00103">
    <property type="entry name" value="DNA_YbaB_EbfC"/>
    <property type="match status" value="1"/>
</dbReference>
<dbReference type="PANTHER" id="PTHR33449">
    <property type="entry name" value="NUCLEOID-ASSOCIATED PROTEIN YBAB"/>
    <property type="match status" value="1"/>
</dbReference>
<dbReference type="PANTHER" id="PTHR33449:SF1">
    <property type="entry name" value="NUCLEOID-ASSOCIATED PROTEIN YBAB"/>
    <property type="match status" value="1"/>
</dbReference>
<dbReference type="Pfam" id="PF02575">
    <property type="entry name" value="YbaB_DNA_bd"/>
    <property type="match status" value="1"/>
</dbReference>
<dbReference type="PIRSF" id="PIRSF004555">
    <property type="entry name" value="UCP004555"/>
    <property type="match status" value="1"/>
</dbReference>
<dbReference type="SUPFAM" id="SSF82607">
    <property type="entry name" value="YbaB-like"/>
    <property type="match status" value="1"/>
</dbReference>
<proteinExistence type="inferred from homology"/>
<protein>
    <recommendedName>
        <fullName evidence="1">Nucleoid-associated protein SPH_1195</fullName>
    </recommendedName>
</protein>
<organism>
    <name type="scientific">Streptococcus pneumoniae (strain Hungary19A-6)</name>
    <dbReference type="NCBI Taxonomy" id="487214"/>
    <lineage>
        <taxon>Bacteria</taxon>
        <taxon>Bacillati</taxon>
        <taxon>Bacillota</taxon>
        <taxon>Bacilli</taxon>
        <taxon>Lactobacillales</taxon>
        <taxon>Streptococcaceae</taxon>
        <taxon>Streptococcus</taxon>
    </lineage>
</organism>